<evidence type="ECO:0000255" key="1"/>
<evidence type="ECO:0000255" key="2">
    <source>
        <dbReference type="PROSITE-ProRule" id="PRU01360"/>
    </source>
</evidence>
<evidence type="ECO:0000269" key="3">
    <source>
    </source>
</evidence>
<evidence type="ECO:0000269" key="4">
    <source>
    </source>
</evidence>
<evidence type="ECO:0000269" key="5">
    <source>
    </source>
</evidence>
<evidence type="ECO:0000269" key="6">
    <source>
    </source>
</evidence>
<evidence type="ECO:0000269" key="7">
    <source>
    </source>
</evidence>
<evidence type="ECO:0000269" key="8">
    <source>
    </source>
</evidence>
<evidence type="ECO:0000269" key="9">
    <source>
    </source>
</evidence>
<evidence type="ECO:0000305" key="10"/>
<evidence type="ECO:0007829" key="11">
    <source>
        <dbReference type="PDB" id="6BPM"/>
    </source>
</evidence>
<evidence type="ECO:0007829" key="12">
    <source>
        <dbReference type="PDB" id="6BPN"/>
    </source>
</evidence>
<accession>P75780</accession>
<reference key="1">
    <citation type="journal article" date="1996" name="DNA Res.">
        <title>A 718-kb DNA sequence of the Escherichia coli K-12 genome corresponding to the 12.7-28.0 min region on the linkage map.</title>
        <authorList>
            <person name="Oshima T."/>
            <person name="Aiba H."/>
            <person name="Baba T."/>
            <person name="Fujita K."/>
            <person name="Hayashi K."/>
            <person name="Honjo A."/>
            <person name="Ikemoto K."/>
            <person name="Inada T."/>
            <person name="Itoh T."/>
            <person name="Kajihara M."/>
            <person name="Kanai K."/>
            <person name="Kashimoto K."/>
            <person name="Kimura S."/>
            <person name="Kitagawa M."/>
            <person name="Makino K."/>
            <person name="Masuda S."/>
            <person name="Miki T."/>
            <person name="Mizobuchi K."/>
            <person name="Mori H."/>
            <person name="Motomura K."/>
            <person name="Nakamura Y."/>
            <person name="Nashimoto H."/>
            <person name="Nishio Y."/>
            <person name="Saito N."/>
            <person name="Sampei G."/>
            <person name="Seki Y."/>
            <person name="Tagami H."/>
            <person name="Takemoto K."/>
            <person name="Wada C."/>
            <person name="Yamamoto Y."/>
            <person name="Yano M."/>
            <person name="Horiuchi T."/>
        </authorList>
    </citation>
    <scope>NUCLEOTIDE SEQUENCE [LARGE SCALE GENOMIC DNA]</scope>
    <source>
        <strain>K12 / W3110 / ATCC 27325 / DSM 5911</strain>
    </source>
</reference>
<reference key="2">
    <citation type="journal article" date="1997" name="Science">
        <title>The complete genome sequence of Escherichia coli K-12.</title>
        <authorList>
            <person name="Blattner F.R."/>
            <person name="Plunkett G. III"/>
            <person name="Bloch C.A."/>
            <person name="Perna N.T."/>
            <person name="Burland V."/>
            <person name="Riley M."/>
            <person name="Collado-Vides J."/>
            <person name="Glasner J.D."/>
            <person name="Rode C.K."/>
            <person name="Mayhew G.F."/>
            <person name="Gregor J."/>
            <person name="Davis N.W."/>
            <person name="Kirkpatrick H.A."/>
            <person name="Goeden M.A."/>
            <person name="Rose D.J."/>
            <person name="Mau B."/>
            <person name="Shao Y."/>
        </authorList>
    </citation>
    <scope>NUCLEOTIDE SEQUENCE [LARGE SCALE GENOMIC DNA]</scope>
    <source>
        <strain>K12 / MG1655 / ATCC 47076</strain>
    </source>
</reference>
<reference key="3">
    <citation type="journal article" date="2006" name="Mol. Syst. Biol.">
        <title>Highly accurate genome sequences of Escherichia coli K-12 strains MG1655 and W3110.</title>
        <authorList>
            <person name="Hayashi K."/>
            <person name="Morooka N."/>
            <person name="Yamamoto Y."/>
            <person name="Fujita K."/>
            <person name="Isono K."/>
            <person name="Choi S."/>
            <person name="Ohtsubo E."/>
            <person name="Baba T."/>
            <person name="Wanner B.L."/>
            <person name="Mori H."/>
            <person name="Horiuchi T."/>
        </authorList>
    </citation>
    <scope>NUCLEOTIDE SEQUENCE [LARGE SCALE GENOMIC DNA]</scope>
    <source>
        <strain>K12 / W3110 / ATCC 27325 / DSM 5911</strain>
    </source>
</reference>
<reference key="4">
    <citation type="journal article" date="1988" name="Antimicrob. Agents Chemother.">
        <title>Iron-regulated outer membrane proteins of Escherichia coli K-12 and mechanism of action of catechol-substituted cephalosporins.</title>
        <authorList>
            <person name="Curtis N.A.C."/>
            <person name="Eisenstadt R.L."/>
            <person name="East S.J."/>
            <person name="Cornford R.J."/>
            <person name="Walker L.A."/>
            <person name="White A.J."/>
        </authorList>
    </citation>
    <scope>FUNCTION IN TRANSPORT OF CATECHOL-SUBSTITUTED CEPHALOSPORINS</scope>
    <scope>INDUCTION</scope>
    <source>
        <strain>K12</strain>
    </source>
</reference>
<reference key="5">
    <citation type="journal article" date="1990" name="FEMS Microbiol. Lett.">
        <title>Dihydroxybenzoylserine -- a siderophore for E. coli.</title>
        <authorList>
            <person name="Hantke K."/>
        </authorList>
    </citation>
    <scope>FUNCTION</scope>
    <source>
        <strain>K12</strain>
    </source>
</reference>
<reference key="6">
    <citation type="journal article" date="1990" name="J. Bacteriol.">
        <title>Cir and Fiu proteins in the outer membrane of Escherichia coli catalyze transport of monomeric catechols: study with beta-lactam antibiotics containing catechol and analogous groups.</title>
        <authorList>
            <person name="Nikaido H."/>
            <person name="Rosenberg E.Y."/>
        </authorList>
    </citation>
    <scope>FUNCTION IN TRANSPORT OF CATECHOL-CONTAINING ANTIBIOTICS</scope>
    <source>
        <strain>K12</strain>
    </source>
</reference>
<reference key="7">
    <citation type="journal article" date="1991" name="FEMS Microbiol. Lett.">
        <title>Iron content and FNR-dependent gene regulation in Escherichia coli.</title>
        <authorList>
            <person name="Niehaus F."/>
            <person name="Hantke K."/>
            <person name="Unden G."/>
        </authorList>
    </citation>
    <scope>INDUCTION</scope>
    <source>
        <strain>K12 / MC4100 / ATCC 35695 / DSM 6574</strain>
    </source>
</reference>
<reference key="8">
    <citation type="journal article" date="1999" name="Mol. Microbiol.">
        <title>Differential fiu-lacZ fusion regulation linked to Escherichia coli colony development.</title>
        <authorList>
            <person name="Newman D.L."/>
            <person name="Shapiro J.A."/>
        </authorList>
    </citation>
    <scope>INDUCTION</scope>
    <source>
        <strain>K12</strain>
    </source>
</reference>
<reference key="9">
    <citation type="journal article" date="2000" name="Eur. J. Biochem.">
        <title>Proteomic analysis of the Escherichia coli outer membrane.</title>
        <authorList>
            <person name="Molloy M.P."/>
            <person name="Herbert B.R."/>
            <person name="Slade M.B."/>
            <person name="Rabilloud T."/>
            <person name="Nouwens A.S."/>
            <person name="Williams K.L."/>
            <person name="Gooley A.A."/>
        </authorList>
    </citation>
    <scope>IDENTIFICATION BY MASS SPECTROMETRY</scope>
    <scope>PUTATIVE FUNCTION</scope>
</reference>
<reference key="10">
    <citation type="journal article" date="2003" name="Microbiology">
        <title>The colicin G, H and X determinants encode microcins M and H47, which might utilize the catecholate siderophore receptors FepA, Cir, Fiu and IroN.</title>
        <authorList>
            <person name="Patzer S.I."/>
            <person name="Baquero M.R."/>
            <person name="Bravo D."/>
            <person name="Moreno F."/>
            <person name="Hantke K."/>
        </authorList>
    </citation>
    <scope>FUNCTION</scope>
</reference>
<reference key="11">
    <citation type="journal article" date="2006" name="BioMetals">
        <title>Parasitism of iron-siderophore receptors of Escherichia coli by the siderophore-peptide microcin E492m and its unmodified counterpart.</title>
        <authorList>
            <person name="Destoumieux-Garzon D."/>
            <person name="Peduzzi J."/>
            <person name="Thomas X."/>
            <person name="Djediat C."/>
            <person name="Rebuffat S."/>
        </authorList>
    </citation>
    <scope>FUNCTION</scope>
</reference>
<organism>
    <name type="scientific">Escherichia coli (strain K12)</name>
    <dbReference type="NCBI Taxonomy" id="83333"/>
    <lineage>
        <taxon>Bacteria</taxon>
        <taxon>Pseudomonadati</taxon>
        <taxon>Pseudomonadota</taxon>
        <taxon>Gammaproteobacteria</taxon>
        <taxon>Enterobacterales</taxon>
        <taxon>Enterobacteriaceae</taxon>
        <taxon>Escherichia</taxon>
    </lineage>
</organism>
<comment type="function">
    <text evidence="4 5 7 8 9">Involved in the active transport across the outer membrane of iron complexed with catecholate siderophores such as dihydroxybenzoylserine and dihydroxybenzoate. It derives its energy for transport by interacting with the trans-periplasmic membrane protein TonB. Can also transport catechol-substituted cephalosporins. Receptor for microcins M, H47 and E492.</text>
</comment>
<comment type="subcellular location">
    <subcellularLocation>
        <location evidence="2">Cell outer membrane</location>
        <topology evidence="2">Multi-pass membrane protein</topology>
    </subcellularLocation>
</comment>
<comment type="induction">
    <text evidence="3 6 9">Repressed by iron.</text>
</comment>
<comment type="similarity">
    <text evidence="10">Belongs to the TonB-dependent receptor family.</text>
</comment>
<name>FIU_ECOLI</name>
<sequence>MENNRNFPARQFHSLTFFAGLCIGITPVAQALAAEGQTNADDTLVVEASTPSLYAPQQSADPKFSRPVADTTRTMTVISEQVIKDQGATNLTDALKNVPGVGAFFAGENGNSTTGDAIYMRGADTSNSIYIDGIRDIGSVSRDTFNTEQVEVIKGPSGTDYGRSAPTGSINMISKQPRNDSGIDASASIGSAWFRRGTLDVNQVIGDTTAVRLNVMGEKTHDAGRDKVKNERYGVAPSVAFGLGTANRLYLNYLHVTQHNTPDGGIPTIGLPGYSAPSAGTAALNHSGKVDTHNFYGTDSDYDDSTTDTATMRFEHDINDNTTIRNTTRWSRVKQDYLMTAIMGGASNITQPTSDVNSWTWSRTANTKDVSNKILTNQTNLTSTFYTGSIGHDVSTGVEFTRETQTNYGVNPVTLPAVNIYHPDSSIHPGGLTRNGANANGQTDTFAIYAFDTLQITRDFELNGGIRLDNYHTEYDSATACGGSGRGAITCPTGVAKGSPVTTVDTAKSGNLMNWKAGALYHLTENGNVYINYAVSQQPPGGNNFALAQSGSGNSANRTDFKPQKANTSEIGTKWQVLDKRLLLTAALFRTDIENEVEQNDDGTYSQYGKKRVEGYEISVAGNITPAWQVIGGYTQQKATIKNGKDVAQDGSSSLPYTPEHAFTLWSQYQATDDISVGAGARYIGSMHKGSDGAVGTPAFTEGYWVADAKLGYRVNRNLDFQLNVYNLFDTDYVASINKSGYRYHPGEPRTFLLTANMHF</sequence>
<dbReference type="EMBL" id="U00096">
    <property type="protein sequence ID" value="AAC73892.1"/>
    <property type="molecule type" value="Genomic_DNA"/>
</dbReference>
<dbReference type="EMBL" id="AP009048">
    <property type="protein sequence ID" value="BAA35471.1"/>
    <property type="molecule type" value="Genomic_DNA"/>
</dbReference>
<dbReference type="PIR" id="E64817">
    <property type="entry name" value="E64817"/>
</dbReference>
<dbReference type="RefSeq" id="NP_415326.1">
    <property type="nucleotide sequence ID" value="NC_000913.3"/>
</dbReference>
<dbReference type="RefSeq" id="WP_000430057.1">
    <property type="nucleotide sequence ID" value="NZ_STEB01000019.1"/>
</dbReference>
<dbReference type="PDB" id="6BPM">
    <property type="method" value="X-ray"/>
    <property type="resolution" value="2.50 A"/>
    <property type="chains" value="A/C=34-760"/>
</dbReference>
<dbReference type="PDB" id="6BPN">
    <property type="method" value="X-ray"/>
    <property type="resolution" value="2.10 A"/>
    <property type="chains" value="A=34-760"/>
</dbReference>
<dbReference type="PDB" id="6BPO">
    <property type="method" value="X-ray"/>
    <property type="resolution" value="2.90 A"/>
    <property type="chains" value="A/B/C/D=34-760"/>
</dbReference>
<dbReference type="PDBsum" id="6BPM"/>
<dbReference type="PDBsum" id="6BPN"/>
<dbReference type="PDBsum" id="6BPO"/>
<dbReference type="SMR" id="P75780"/>
<dbReference type="BioGRID" id="4259972">
    <property type="interactions" value="128"/>
</dbReference>
<dbReference type="ComplexPortal" id="CPX-3580">
    <property type="entry name" value="fiu outer membrane transporter complex"/>
</dbReference>
<dbReference type="DIP" id="DIP-11432N"/>
<dbReference type="FunCoup" id="P75780">
    <property type="interactions" value="328"/>
</dbReference>
<dbReference type="IntAct" id="P75780">
    <property type="interactions" value="4"/>
</dbReference>
<dbReference type="STRING" id="511145.b0805"/>
<dbReference type="DrugBank" id="DB14879">
    <property type="generic name" value="Cefiderocol"/>
</dbReference>
<dbReference type="TCDB" id="1.B.14.1.9">
    <property type="family name" value="the outer membrane receptor (omr) family"/>
</dbReference>
<dbReference type="PaxDb" id="511145-b0805"/>
<dbReference type="EnsemblBacteria" id="AAC73892">
    <property type="protein sequence ID" value="AAC73892"/>
    <property type="gene ID" value="b0805"/>
</dbReference>
<dbReference type="GeneID" id="946246"/>
<dbReference type="KEGG" id="ecj:JW0790"/>
<dbReference type="KEGG" id="eco:b0805"/>
<dbReference type="KEGG" id="ecoc:C3026_05075"/>
<dbReference type="PATRIC" id="fig|1411691.4.peg.1473"/>
<dbReference type="EchoBASE" id="EB3101"/>
<dbReference type="eggNOG" id="COG4774">
    <property type="taxonomic scope" value="Bacteria"/>
</dbReference>
<dbReference type="HOGENOM" id="CLU_008287_9_1_6"/>
<dbReference type="InParanoid" id="P75780"/>
<dbReference type="OMA" id="TANYVHT"/>
<dbReference type="OrthoDB" id="9790771at2"/>
<dbReference type="PhylomeDB" id="P75780"/>
<dbReference type="BioCyc" id="EcoCyc:G6414-MONOMER"/>
<dbReference type="BioCyc" id="MetaCyc:G6414-MONOMER"/>
<dbReference type="PRO" id="PR:P75780"/>
<dbReference type="Proteomes" id="UP000000625">
    <property type="component" value="Chromosome"/>
</dbReference>
<dbReference type="GO" id="GO:0009279">
    <property type="term" value="C:cell outer membrane"/>
    <property type="evidence" value="ECO:0000318"/>
    <property type="project" value="GO_Central"/>
</dbReference>
<dbReference type="GO" id="GO:0016020">
    <property type="term" value="C:membrane"/>
    <property type="evidence" value="ECO:0000303"/>
    <property type="project" value="ComplexPortal"/>
</dbReference>
<dbReference type="GO" id="GO:1902495">
    <property type="term" value="C:transmembrane transporter complex"/>
    <property type="evidence" value="ECO:0000303"/>
    <property type="project" value="ComplexPortal"/>
</dbReference>
<dbReference type="GO" id="GO:0015344">
    <property type="term" value="F:siderophore uptake transmembrane transporter activity"/>
    <property type="evidence" value="ECO:0000314"/>
    <property type="project" value="EcoCyc"/>
</dbReference>
<dbReference type="GO" id="GO:0038023">
    <property type="term" value="F:signaling receptor activity"/>
    <property type="evidence" value="ECO:0007669"/>
    <property type="project" value="InterPro"/>
</dbReference>
<dbReference type="GO" id="GO:0006879">
    <property type="term" value="P:intracellular iron ion homeostasis"/>
    <property type="evidence" value="ECO:0000303"/>
    <property type="project" value="ComplexPortal"/>
</dbReference>
<dbReference type="GO" id="GO:0042884">
    <property type="term" value="P:microcin transport"/>
    <property type="evidence" value="ECO:0000315"/>
    <property type="project" value="EcoliWiki"/>
</dbReference>
<dbReference type="GO" id="GO:0015891">
    <property type="term" value="P:siderophore transport"/>
    <property type="evidence" value="ECO:0000315"/>
    <property type="project" value="EcoliWiki"/>
</dbReference>
<dbReference type="GO" id="GO:0033214">
    <property type="term" value="P:siderophore-dependent iron import into cell"/>
    <property type="evidence" value="ECO:0000314"/>
    <property type="project" value="EcoCyc"/>
</dbReference>
<dbReference type="CDD" id="cd01347">
    <property type="entry name" value="ligand_gated_channel"/>
    <property type="match status" value="1"/>
</dbReference>
<dbReference type="FunFam" id="2.40.170.20:FF:000006">
    <property type="entry name" value="Catecholate siderophore receptor fiu"/>
    <property type="match status" value="1"/>
</dbReference>
<dbReference type="FunFam" id="2.170.130.10:FF:000001">
    <property type="entry name" value="Catecholate siderophore TonB-dependent receptor"/>
    <property type="match status" value="1"/>
</dbReference>
<dbReference type="Gene3D" id="2.40.170.20">
    <property type="entry name" value="TonB-dependent receptor, beta-barrel domain"/>
    <property type="match status" value="1"/>
</dbReference>
<dbReference type="Gene3D" id="2.170.130.10">
    <property type="entry name" value="TonB-dependent receptor, plug domain"/>
    <property type="match status" value="1"/>
</dbReference>
<dbReference type="InterPro" id="IPR012910">
    <property type="entry name" value="Plug_dom"/>
</dbReference>
<dbReference type="InterPro" id="IPR037066">
    <property type="entry name" value="Plug_dom_sf"/>
</dbReference>
<dbReference type="InterPro" id="IPR039426">
    <property type="entry name" value="TonB-dep_rcpt-like"/>
</dbReference>
<dbReference type="InterPro" id="IPR000531">
    <property type="entry name" value="TonB-dep_rcpt_b-brl"/>
</dbReference>
<dbReference type="InterPro" id="IPR010916">
    <property type="entry name" value="TonB_box_CS"/>
</dbReference>
<dbReference type="InterPro" id="IPR036942">
    <property type="entry name" value="TonB_rcpt_b-brl_sf"/>
</dbReference>
<dbReference type="InterPro" id="IPR010105">
    <property type="entry name" value="TonB_sidphr_rcpt"/>
</dbReference>
<dbReference type="NCBIfam" id="NF007349">
    <property type="entry name" value="PRK09840.1"/>
    <property type="match status" value="1"/>
</dbReference>
<dbReference type="NCBIfam" id="TIGR01783">
    <property type="entry name" value="TonB-siderophor"/>
    <property type="match status" value="1"/>
</dbReference>
<dbReference type="PANTHER" id="PTHR32552:SF89">
    <property type="entry name" value="CATECHOLATE SIDEROPHORE RECEPTOR FIU"/>
    <property type="match status" value="1"/>
</dbReference>
<dbReference type="PANTHER" id="PTHR32552">
    <property type="entry name" value="FERRICHROME IRON RECEPTOR-RELATED"/>
    <property type="match status" value="1"/>
</dbReference>
<dbReference type="Pfam" id="PF07715">
    <property type="entry name" value="Plug"/>
    <property type="match status" value="1"/>
</dbReference>
<dbReference type="Pfam" id="PF00593">
    <property type="entry name" value="TonB_dep_Rec_b-barrel"/>
    <property type="match status" value="1"/>
</dbReference>
<dbReference type="SUPFAM" id="SSF56935">
    <property type="entry name" value="Porins"/>
    <property type="match status" value="1"/>
</dbReference>
<dbReference type="PROSITE" id="PS00430">
    <property type="entry name" value="TONB_DEPENDENT_REC_1"/>
    <property type="match status" value="1"/>
</dbReference>
<dbReference type="PROSITE" id="PS52016">
    <property type="entry name" value="TONB_DEPENDENT_REC_3"/>
    <property type="match status" value="1"/>
</dbReference>
<gene>
    <name type="primary">fiu</name>
    <name type="synonym">ybiL</name>
    <name type="ordered locus">b0805</name>
    <name type="ordered locus">JW0790</name>
</gene>
<feature type="signal peptide" evidence="1">
    <location>
        <begin position="1"/>
        <end position="31"/>
    </location>
</feature>
<feature type="chain" id="PRO_0000034790" description="Catecholate siderophore receptor Fiu">
    <location>
        <begin position="32"/>
        <end position="760"/>
    </location>
</feature>
<feature type="domain" description="TBDR plug" evidence="2">
    <location>
        <begin position="67"/>
        <end position="175"/>
    </location>
</feature>
<feature type="domain" description="TBDR beta-barrel" evidence="2">
    <location>
        <begin position="180"/>
        <end position="760"/>
    </location>
</feature>
<feature type="short sequence motif" description="TonB C-terminal box">
    <location>
        <begin position="743"/>
        <end position="760"/>
    </location>
</feature>
<feature type="helix" evidence="12">
    <location>
        <begin position="68"/>
        <end position="70"/>
    </location>
</feature>
<feature type="strand" evidence="12">
    <location>
        <begin position="71"/>
        <end position="79"/>
    </location>
</feature>
<feature type="helix" evidence="12">
    <location>
        <begin position="80"/>
        <end position="85"/>
    </location>
</feature>
<feature type="helix" evidence="12">
    <location>
        <begin position="91"/>
        <end position="94"/>
    </location>
</feature>
<feature type="helix" evidence="12">
    <location>
        <begin position="95"/>
        <end position="97"/>
    </location>
</feature>
<feature type="strand" evidence="12">
    <location>
        <begin position="102"/>
        <end position="105"/>
    </location>
</feature>
<feature type="strand" evidence="12">
    <location>
        <begin position="117"/>
        <end position="120"/>
    </location>
</feature>
<feature type="helix" evidence="12">
    <location>
        <begin position="126"/>
        <end position="128"/>
    </location>
</feature>
<feature type="strand" evidence="12">
    <location>
        <begin position="129"/>
        <end position="131"/>
    </location>
</feature>
<feature type="strand" evidence="12">
    <location>
        <begin position="147"/>
        <end position="155"/>
    </location>
</feature>
<feature type="helix" evidence="12">
    <location>
        <begin position="158"/>
        <end position="161"/>
    </location>
</feature>
<feature type="strand" evidence="12">
    <location>
        <begin position="168"/>
        <end position="174"/>
    </location>
</feature>
<feature type="strand" evidence="12">
    <location>
        <begin position="182"/>
        <end position="190"/>
    </location>
</feature>
<feature type="helix" evidence="12">
    <location>
        <begin position="191"/>
        <end position="193"/>
    </location>
</feature>
<feature type="strand" evidence="12">
    <location>
        <begin position="194"/>
        <end position="204"/>
    </location>
</feature>
<feature type="strand" evidence="12">
    <location>
        <begin position="206"/>
        <end position="208"/>
    </location>
</feature>
<feature type="strand" evidence="12">
    <location>
        <begin position="210"/>
        <end position="221"/>
    </location>
</feature>
<feature type="strand" evidence="12">
    <location>
        <begin position="225"/>
        <end position="227"/>
    </location>
</feature>
<feature type="strand" evidence="12">
    <location>
        <begin position="229"/>
        <end position="242"/>
    </location>
</feature>
<feature type="strand" evidence="12">
    <location>
        <begin position="245"/>
        <end position="261"/>
    </location>
</feature>
<feature type="helix" evidence="12">
    <location>
        <begin position="279"/>
        <end position="285"/>
    </location>
</feature>
<feature type="strand" evidence="12">
    <location>
        <begin position="302"/>
        <end position="319"/>
    </location>
</feature>
<feature type="strand" evidence="12">
    <location>
        <begin position="322"/>
        <end position="343"/>
    </location>
</feature>
<feature type="helix" evidence="12">
    <location>
        <begin position="346"/>
        <end position="348"/>
    </location>
</feature>
<feature type="strand" evidence="12">
    <location>
        <begin position="352"/>
        <end position="355"/>
    </location>
</feature>
<feature type="helix" evidence="12">
    <location>
        <begin position="356"/>
        <end position="358"/>
    </location>
</feature>
<feature type="strand" evidence="12">
    <location>
        <begin position="360"/>
        <end position="387"/>
    </location>
</feature>
<feature type="strand" evidence="12">
    <location>
        <begin position="390"/>
        <end position="407"/>
    </location>
</feature>
<feature type="strand" evidence="12">
    <location>
        <begin position="418"/>
        <end position="422"/>
    </location>
</feature>
<feature type="strand" evidence="12">
    <location>
        <begin position="439"/>
        <end position="455"/>
    </location>
</feature>
<feature type="strand" evidence="12">
    <location>
        <begin position="457"/>
        <end position="480"/>
    </location>
</feature>
<feature type="strand" evidence="12">
    <location>
        <begin position="485"/>
        <end position="487"/>
    </location>
</feature>
<feature type="strand" evidence="12">
    <location>
        <begin position="500"/>
        <end position="538"/>
    </location>
</feature>
<feature type="turn" evidence="11">
    <location>
        <begin position="540"/>
        <end position="544"/>
    </location>
</feature>
<feature type="strand" evidence="11">
    <location>
        <begin position="552"/>
        <end position="554"/>
    </location>
</feature>
<feature type="strand" evidence="12">
    <location>
        <begin position="564"/>
        <end position="577"/>
    </location>
</feature>
<feature type="turn" evidence="12">
    <location>
        <begin position="578"/>
        <end position="581"/>
    </location>
</feature>
<feature type="strand" evidence="12">
    <location>
        <begin position="582"/>
        <end position="594"/>
    </location>
</feature>
<feature type="strand" evidence="11">
    <location>
        <begin position="601"/>
        <end position="603"/>
    </location>
</feature>
<feature type="strand" evidence="12">
    <location>
        <begin position="611"/>
        <end position="625"/>
    </location>
</feature>
<feature type="strand" evidence="12">
    <location>
        <begin position="628"/>
        <end position="640"/>
    </location>
</feature>
<feature type="strand" evidence="11">
    <location>
        <begin position="651"/>
        <end position="654"/>
    </location>
</feature>
<feature type="strand" evidence="12">
    <location>
        <begin position="660"/>
        <end position="670"/>
    </location>
</feature>
<feature type="strand" evidence="12">
    <location>
        <begin position="672"/>
        <end position="684"/>
    </location>
</feature>
<feature type="strand" evidence="11">
    <location>
        <begin position="695"/>
        <end position="697"/>
    </location>
</feature>
<feature type="strand" evidence="12">
    <location>
        <begin position="699"/>
        <end position="701"/>
    </location>
</feature>
<feature type="strand" evidence="12">
    <location>
        <begin position="704"/>
        <end position="716"/>
    </location>
</feature>
<feature type="strand" evidence="12">
    <location>
        <begin position="719"/>
        <end position="727"/>
    </location>
</feature>
<feature type="strand" evidence="12">
    <location>
        <begin position="734"/>
        <end position="737"/>
    </location>
</feature>
<feature type="strand" evidence="12">
    <location>
        <begin position="739"/>
        <end position="746"/>
    </location>
</feature>
<feature type="strand" evidence="12">
    <location>
        <begin position="751"/>
        <end position="759"/>
    </location>
</feature>
<protein>
    <recommendedName>
        <fullName>Catecholate siderophore receptor Fiu</fullName>
    </recommendedName>
    <alternativeName>
        <fullName>Ferric iron uptake protein</fullName>
    </alternativeName>
    <alternativeName>
        <fullName>TonB-dependent receptor Fiu</fullName>
    </alternativeName>
</protein>
<proteinExistence type="evidence at protein level"/>
<keyword id="KW-0002">3D-structure</keyword>
<keyword id="KW-0998">Cell outer membrane</keyword>
<keyword id="KW-0406">Ion transport</keyword>
<keyword id="KW-0408">Iron</keyword>
<keyword id="KW-0410">Iron transport</keyword>
<keyword id="KW-0472">Membrane</keyword>
<keyword id="KW-0675">Receptor</keyword>
<keyword id="KW-1185">Reference proteome</keyword>
<keyword id="KW-0732">Signal</keyword>
<keyword id="KW-0798">TonB box</keyword>
<keyword id="KW-0812">Transmembrane</keyword>
<keyword id="KW-1134">Transmembrane beta strand</keyword>
<keyword id="KW-0813">Transport</keyword>